<protein>
    <recommendedName>
        <fullName evidence="1">Uncharacterized N-acetyltransferase BAA_4086</fullName>
        <ecNumber evidence="1">2.3.1.-</ecNumber>
    </recommendedName>
</protein>
<sequence>MGFPKVERLLINYKTLDEFKKFKGCGAQELSMLEELQANIIENDSESPFYGIYYGGSLIARMSLYMKRNGGEPFEITGTYLELYKLEVLPNFQKQGFGEMLVNYAKGLQFPIKTIARIHSAGFWDKLNFQPVSVPDGDFYVWHPETNLNAVTNEESA</sequence>
<gene>
    <name type="ordered locus">BAA_4086</name>
</gene>
<name>Y4086_BACAA</name>
<accession>C3P691</accession>
<feature type="chain" id="PRO_1000148761" description="Uncharacterized N-acetyltransferase BAA_4086">
    <location>
        <begin position="1"/>
        <end position="157"/>
    </location>
</feature>
<feature type="domain" description="N-acetyltransferase" evidence="1">
    <location>
        <begin position="9"/>
        <end position="146"/>
    </location>
</feature>
<proteinExistence type="inferred from homology"/>
<evidence type="ECO:0000255" key="1">
    <source>
        <dbReference type="HAMAP-Rule" id="MF_00824"/>
    </source>
</evidence>
<keyword id="KW-0012">Acyltransferase</keyword>
<keyword id="KW-0808">Transferase</keyword>
<dbReference type="EC" id="2.3.1.-" evidence="1"/>
<dbReference type="EMBL" id="CP001598">
    <property type="protein sequence ID" value="ACQ47035.1"/>
    <property type="molecule type" value="Genomic_DNA"/>
</dbReference>
<dbReference type="RefSeq" id="WP_000506700.1">
    <property type="nucleotide sequence ID" value="NC_012659.1"/>
</dbReference>
<dbReference type="SMR" id="C3P691"/>
<dbReference type="GeneID" id="45023750"/>
<dbReference type="KEGG" id="bai:BAA_4086"/>
<dbReference type="HOGENOM" id="CLU_136634_0_0_9"/>
<dbReference type="GO" id="GO:0016747">
    <property type="term" value="F:acyltransferase activity, transferring groups other than amino-acyl groups"/>
    <property type="evidence" value="ECO:0007669"/>
    <property type="project" value="UniProtKB-UniRule"/>
</dbReference>
<dbReference type="CDD" id="cd04301">
    <property type="entry name" value="NAT_SF"/>
    <property type="match status" value="1"/>
</dbReference>
<dbReference type="Gene3D" id="3.40.630.30">
    <property type="match status" value="1"/>
</dbReference>
<dbReference type="HAMAP" id="MF_00824">
    <property type="entry name" value="Acetyltransf_YlbP"/>
    <property type="match status" value="1"/>
</dbReference>
<dbReference type="InterPro" id="IPR016181">
    <property type="entry name" value="Acyl_CoA_acyltransferase"/>
</dbReference>
<dbReference type="InterPro" id="IPR000182">
    <property type="entry name" value="GNAT_dom"/>
</dbReference>
<dbReference type="InterPro" id="IPR017274">
    <property type="entry name" value="YlbP"/>
</dbReference>
<dbReference type="NCBIfam" id="NF010241">
    <property type="entry name" value="PRK13688.1"/>
    <property type="match status" value="1"/>
</dbReference>
<dbReference type="Pfam" id="PF00583">
    <property type="entry name" value="Acetyltransf_1"/>
    <property type="match status" value="1"/>
</dbReference>
<dbReference type="PIRSF" id="PIRSF037732">
    <property type="entry name" value="YlbP_prd"/>
    <property type="match status" value="1"/>
</dbReference>
<dbReference type="SUPFAM" id="SSF55729">
    <property type="entry name" value="Acyl-CoA N-acyltransferases (Nat)"/>
    <property type="match status" value="1"/>
</dbReference>
<organism>
    <name type="scientific">Bacillus anthracis (strain A0248)</name>
    <dbReference type="NCBI Taxonomy" id="592021"/>
    <lineage>
        <taxon>Bacteria</taxon>
        <taxon>Bacillati</taxon>
        <taxon>Bacillota</taxon>
        <taxon>Bacilli</taxon>
        <taxon>Bacillales</taxon>
        <taxon>Bacillaceae</taxon>
        <taxon>Bacillus</taxon>
        <taxon>Bacillus cereus group</taxon>
    </lineage>
</organism>
<reference key="1">
    <citation type="submission" date="2009-04" db="EMBL/GenBank/DDBJ databases">
        <title>Genome sequence of Bacillus anthracis A0248.</title>
        <authorList>
            <person name="Dodson R.J."/>
            <person name="Munk A.C."/>
            <person name="Bruce D."/>
            <person name="Detter C."/>
            <person name="Tapia R."/>
            <person name="Sutton G."/>
            <person name="Sims D."/>
            <person name="Brettin T."/>
        </authorList>
    </citation>
    <scope>NUCLEOTIDE SEQUENCE [LARGE SCALE GENOMIC DNA]</scope>
    <source>
        <strain>A0248</strain>
    </source>
</reference>